<evidence type="ECO:0000255" key="1">
    <source>
        <dbReference type="HAMAP-Rule" id="MF_01846"/>
    </source>
</evidence>
<dbReference type="EC" id="3.6.1.9" evidence="1"/>
<dbReference type="EC" id="3.6.1.12" evidence="1"/>
<dbReference type="EC" id="3.6.1.-" evidence="1"/>
<dbReference type="EC" id="3.6.1.23" evidence="1"/>
<dbReference type="EMBL" id="AE014075">
    <property type="protein sequence ID" value="AAN81247.1"/>
    <property type="molecule type" value="Genomic_DNA"/>
</dbReference>
<dbReference type="RefSeq" id="WP_001249883.1">
    <property type="nucleotide sequence ID" value="NZ_CP051263.1"/>
</dbReference>
<dbReference type="SMR" id="Q8FFM5"/>
<dbReference type="STRING" id="199310.c2793"/>
<dbReference type="KEGG" id="ecc:c2793"/>
<dbReference type="eggNOG" id="COG0494">
    <property type="taxonomic scope" value="Bacteria"/>
</dbReference>
<dbReference type="HOGENOM" id="CLU_037162_31_0_6"/>
<dbReference type="BioCyc" id="ECOL199310:C2793-MONOMER"/>
<dbReference type="Proteomes" id="UP000001410">
    <property type="component" value="Chromosome"/>
</dbReference>
<dbReference type="GO" id="GO:0047840">
    <property type="term" value="F:dCTP diphosphatase activity"/>
    <property type="evidence" value="ECO:0007669"/>
    <property type="project" value="UniProtKB-EC"/>
</dbReference>
<dbReference type="GO" id="GO:0036218">
    <property type="term" value="F:dTTP diphosphatase activity"/>
    <property type="evidence" value="ECO:0007669"/>
    <property type="project" value="RHEA"/>
</dbReference>
<dbReference type="GO" id="GO:0004170">
    <property type="term" value="F:dUTP diphosphatase activity"/>
    <property type="evidence" value="ECO:0007669"/>
    <property type="project" value="UniProtKB-EC"/>
</dbReference>
<dbReference type="GO" id="GO:0000287">
    <property type="term" value="F:magnesium ion binding"/>
    <property type="evidence" value="ECO:0007669"/>
    <property type="project" value="UniProtKB-UniRule"/>
</dbReference>
<dbReference type="FunFam" id="3.90.79.10:FF:000039">
    <property type="entry name" value="Nucleoside triphosphatase NudI"/>
    <property type="match status" value="1"/>
</dbReference>
<dbReference type="Gene3D" id="3.90.79.10">
    <property type="entry name" value="Nucleoside Triphosphate Pyrophosphohydrolase"/>
    <property type="match status" value="1"/>
</dbReference>
<dbReference type="HAMAP" id="MF_01846">
    <property type="entry name" value="Nudix_NudI"/>
    <property type="match status" value="1"/>
</dbReference>
<dbReference type="InterPro" id="IPR023781">
    <property type="entry name" value="Nucleoside_triphosphatase_NudI"/>
</dbReference>
<dbReference type="InterPro" id="IPR020476">
    <property type="entry name" value="Nudix_hydrolase"/>
</dbReference>
<dbReference type="InterPro" id="IPR015797">
    <property type="entry name" value="NUDIX_hydrolase-like_dom_sf"/>
</dbReference>
<dbReference type="InterPro" id="IPR020084">
    <property type="entry name" value="NUDIX_hydrolase_CS"/>
</dbReference>
<dbReference type="InterPro" id="IPR000086">
    <property type="entry name" value="NUDIX_hydrolase_dom"/>
</dbReference>
<dbReference type="NCBIfam" id="NF012016">
    <property type="entry name" value="PRK15472.1"/>
    <property type="match status" value="1"/>
</dbReference>
<dbReference type="PANTHER" id="PTHR43046">
    <property type="entry name" value="GDP-MANNOSE MANNOSYL HYDROLASE"/>
    <property type="match status" value="1"/>
</dbReference>
<dbReference type="PANTHER" id="PTHR43046:SF14">
    <property type="entry name" value="MUTT_NUDIX FAMILY PROTEIN"/>
    <property type="match status" value="1"/>
</dbReference>
<dbReference type="Pfam" id="PF00293">
    <property type="entry name" value="NUDIX"/>
    <property type="match status" value="1"/>
</dbReference>
<dbReference type="PRINTS" id="PR00502">
    <property type="entry name" value="NUDIXFAMILY"/>
</dbReference>
<dbReference type="SUPFAM" id="SSF55811">
    <property type="entry name" value="Nudix"/>
    <property type="match status" value="1"/>
</dbReference>
<dbReference type="PROSITE" id="PS51462">
    <property type="entry name" value="NUDIX"/>
    <property type="match status" value="1"/>
</dbReference>
<dbReference type="PROSITE" id="PS00893">
    <property type="entry name" value="NUDIX_BOX"/>
    <property type="match status" value="1"/>
</dbReference>
<comment type="function">
    <text evidence="1">Catalyzes the hydrolysis of nucleoside triphosphates, with a preference for pyrimidine deoxynucleoside triphosphates (dUTP, dTTP and dCTP).</text>
</comment>
<comment type="catalytic activity">
    <reaction evidence="1">
        <text>a ribonucleoside 5'-triphosphate + H2O = a ribonucleoside 5'-phosphate + diphosphate + H(+)</text>
        <dbReference type="Rhea" id="RHEA:23996"/>
        <dbReference type="ChEBI" id="CHEBI:15377"/>
        <dbReference type="ChEBI" id="CHEBI:15378"/>
        <dbReference type="ChEBI" id="CHEBI:33019"/>
        <dbReference type="ChEBI" id="CHEBI:58043"/>
        <dbReference type="ChEBI" id="CHEBI:61557"/>
        <dbReference type="EC" id="3.6.1.9"/>
    </reaction>
</comment>
<comment type="catalytic activity">
    <reaction evidence="1">
        <text>a 2'-deoxyribonucleoside 5'-triphosphate + H2O = a 2'-deoxyribonucleoside 5'-phosphate + diphosphate + H(+)</text>
        <dbReference type="Rhea" id="RHEA:44644"/>
        <dbReference type="ChEBI" id="CHEBI:15377"/>
        <dbReference type="ChEBI" id="CHEBI:15378"/>
        <dbReference type="ChEBI" id="CHEBI:33019"/>
        <dbReference type="ChEBI" id="CHEBI:61560"/>
        <dbReference type="ChEBI" id="CHEBI:65317"/>
        <dbReference type="EC" id="3.6.1.9"/>
    </reaction>
</comment>
<comment type="catalytic activity">
    <reaction evidence="1">
        <text>dUTP + H2O = dUMP + diphosphate + H(+)</text>
        <dbReference type="Rhea" id="RHEA:10248"/>
        <dbReference type="ChEBI" id="CHEBI:15377"/>
        <dbReference type="ChEBI" id="CHEBI:15378"/>
        <dbReference type="ChEBI" id="CHEBI:33019"/>
        <dbReference type="ChEBI" id="CHEBI:61555"/>
        <dbReference type="ChEBI" id="CHEBI:246422"/>
        <dbReference type="EC" id="3.6.1.9"/>
    </reaction>
</comment>
<comment type="catalytic activity">
    <reaction evidence="1">
        <text>dUTP + H2O = dUMP + diphosphate + H(+)</text>
        <dbReference type="Rhea" id="RHEA:10248"/>
        <dbReference type="ChEBI" id="CHEBI:15377"/>
        <dbReference type="ChEBI" id="CHEBI:15378"/>
        <dbReference type="ChEBI" id="CHEBI:33019"/>
        <dbReference type="ChEBI" id="CHEBI:61555"/>
        <dbReference type="ChEBI" id="CHEBI:246422"/>
        <dbReference type="EC" id="3.6.1.23"/>
    </reaction>
</comment>
<comment type="catalytic activity">
    <reaction evidence="1">
        <text>dTTP + H2O = dTMP + diphosphate + H(+)</text>
        <dbReference type="Rhea" id="RHEA:28534"/>
        <dbReference type="ChEBI" id="CHEBI:15377"/>
        <dbReference type="ChEBI" id="CHEBI:15378"/>
        <dbReference type="ChEBI" id="CHEBI:33019"/>
        <dbReference type="ChEBI" id="CHEBI:37568"/>
        <dbReference type="ChEBI" id="CHEBI:63528"/>
        <dbReference type="EC" id="3.6.1.9"/>
    </reaction>
</comment>
<comment type="catalytic activity">
    <reaction evidence="1">
        <text>dCTP + H2O = dCMP + diphosphate + H(+)</text>
        <dbReference type="Rhea" id="RHEA:22636"/>
        <dbReference type="ChEBI" id="CHEBI:15377"/>
        <dbReference type="ChEBI" id="CHEBI:15378"/>
        <dbReference type="ChEBI" id="CHEBI:33019"/>
        <dbReference type="ChEBI" id="CHEBI:57566"/>
        <dbReference type="ChEBI" id="CHEBI:61481"/>
        <dbReference type="EC" id="3.6.1.9"/>
    </reaction>
</comment>
<comment type="catalytic activity">
    <reaction evidence="1">
        <text>dCTP + H2O = dCMP + diphosphate + H(+)</text>
        <dbReference type="Rhea" id="RHEA:22636"/>
        <dbReference type="ChEBI" id="CHEBI:15377"/>
        <dbReference type="ChEBI" id="CHEBI:15378"/>
        <dbReference type="ChEBI" id="CHEBI:33019"/>
        <dbReference type="ChEBI" id="CHEBI:57566"/>
        <dbReference type="ChEBI" id="CHEBI:61481"/>
        <dbReference type="EC" id="3.6.1.12"/>
    </reaction>
</comment>
<comment type="cofactor">
    <cofactor evidence="1">
        <name>Mg(2+)</name>
        <dbReference type="ChEBI" id="CHEBI:18420"/>
    </cofactor>
</comment>
<comment type="subunit">
    <text evidence="1">Monomer.</text>
</comment>
<comment type="similarity">
    <text evidence="1">Belongs to the Nudix hydrolase family. NudI subfamily.</text>
</comment>
<name>NUDI_ECOL6</name>
<gene>
    <name evidence="1" type="primary">nudI</name>
    <name type="ordered locus">c2793</name>
</gene>
<sequence>MRQRTIVCPLIQNDGAYLLCKMADDRGVFPGQWALSGGGVEPGERIEEALRREIREELGEQLLLTEITPWTFSDDIRTKTYADGRKEEIYMIYLIFDCVSANRDVKINEEFQDYAWVKPEDLVHYDLNVATRKTLRLKGLL</sequence>
<accession>Q8FFM5</accession>
<feature type="chain" id="PRO_0000342131" description="Nucleoside triphosphatase NudI">
    <location>
        <begin position="1"/>
        <end position="141"/>
    </location>
</feature>
<feature type="domain" description="Nudix hydrolase" evidence="1">
    <location>
        <begin position="1"/>
        <end position="141"/>
    </location>
</feature>
<feature type="short sequence motif" description="Nudix box">
    <location>
        <begin position="38"/>
        <end position="59"/>
    </location>
</feature>
<reference key="1">
    <citation type="journal article" date="2002" name="Proc. Natl. Acad. Sci. U.S.A.">
        <title>Extensive mosaic structure revealed by the complete genome sequence of uropathogenic Escherichia coli.</title>
        <authorList>
            <person name="Welch R.A."/>
            <person name="Burland V."/>
            <person name="Plunkett G. III"/>
            <person name="Redford P."/>
            <person name="Roesch P."/>
            <person name="Rasko D."/>
            <person name="Buckles E.L."/>
            <person name="Liou S.-R."/>
            <person name="Boutin A."/>
            <person name="Hackett J."/>
            <person name="Stroud D."/>
            <person name="Mayhew G.F."/>
            <person name="Rose D.J."/>
            <person name="Zhou S."/>
            <person name="Schwartz D.C."/>
            <person name="Perna N.T."/>
            <person name="Mobley H.L.T."/>
            <person name="Donnenberg M.S."/>
            <person name="Blattner F.R."/>
        </authorList>
    </citation>
    <scope>NUCLEOTIDE SEQUENCE [LARGE SCALE GENOMIC DNA]</scope>
    <source>
        <strain>CFT073 / ATCC 700928 / UPEC</strain>
    </source>
</reference>
<proteinExistence type="inferred from homology"/>
<protein>
    <recommendedName>
        <fullName evidence="1">Nucleoside triphosphatase NudI</fullName>
        <ecNumber evidence="1">3.6.1.9</ecNumber>
    </recommendedName>
    <alternativeName>
        <fullName evidence="1">Nucleotide diphosphatase NudI</fullName>
    </alternativeName>
    <alternativeName>
        <fullName evidence="1">Pyrimidine deoxynucleoside triphosphate diphosphatase</fullName>
    </alternativeName>
    <alternativeName>
        <fullName evidence="1">dCTP diphosphatase</fullName>
        <ecNumber evidence="1">3.6.1.12</ecNumber>
    </alternativeName>
    <alternativeName>
        <fullName evidence="1">dTTP diphosphatase</fullName>
        <ecNumber evidence="1">3.6.1.-</ecNumber>
    </alternativeName>
    <alternativeName>
        <fullName evidence="1">dUTP diphosphatase</fullName>
        <ecNumber evidence="1">3.6.1.23</ecNumber>
    </alternativeName>
</protein>
<organism>
    <name type="scientific">Escherichia coli O6:H1 (strain CFT073 / ATCC 700928 / UPEC)</name>
    <dbReference type="NCBI Taxonomy" id="199310"/>
    <lineage>
        <taxon>Bacteria</taxon>
        <taxon>Pseudomonadati</taxon>
        <taxon>Pseudomonadota</taxon>
        <taxon>Gammaproteobacteria</taxon>
        <taxon>Enterobacterales</taxon>
        <taxon>Enterobacteriaceae</taxon>
        <taxon>Escherichia</taxon>
    </lineage>
</organism>
<keyword id="KW-0378">Hydrolase</keyword>
<keyword id="KW-0460">Magnesium</keyword>
<keyword id="KW-1185">Reference proteome</keyword>